<comment type="function">
    <text evidence="1 3">Part of a specialized transcription system that mediates the transcription of most ribosomal proteins through the 5'-TCT-3' motif which is a core promoter element at these genes. Seems to also mediate the transcription of NF1. Does not bind the TATA box (By similarity). Members of the TBP family are differentially required to regulate transcription and development during early embryogenesis. Particularly regulates genes that have a role in catabolism.</text>
</comment>
<comment type="subcellular location">
    <subcellularLocation>
        <location evidence="1">Cytoplasm</location>
    </subcellularLocation>
    <subcellularLocation>
        <location evidence="1">Nucleus</location>
    </subcellularLocation>
</comment>
<comment type="tissue specificity">
    <text evidence="2">Expressed ubiquitously with highest expression in the ovary and testis.</text>
</comment>
<comment type="similarity">
    <text evidence="4">Belongs to the TBP family.</text>
</comment>
<gene>
    <name type="primary">tbpl1</name>
    <name type="synonym">tlf</name>
    <name type="synonym">trf2</name>
</gene>
<reference key="1">
    <citation type="journal article" date="1999" name="Trends Biochem. Sci.">
        <title>The TBP-like factor: an alternative transcription factor in metazoa?</title>
        <authorList>
            <person name="Dantonel J.-C."/>
            <person name="Wurtz J.-M."/>
            <person name="Poch O."/>
            <person name="Moras D."/>
            <person name="Tora L."/>
        </authorList>
    </citation>
    <scope>NUCLEOTIDE SEQUENCE [MRNA]</scope>
    <source>
        <tissue>Neurula</tissue>
    </source>
</reference>
<reference key="2">
    <citation type="submission" date="2005-02" db="EMBL/GenBank/DDBJ databases">
        <authorList>
            <consortium name="NIH - Xenopus Gene Collection (XGC) project"/>
        </authorList>
    </citation>
    <scope>NUCLEOTIDE SEQUENCE [LARGE SCALE MRNA]</scope>
    <source>
        <tissue>Egg</tissue>
    </source>
</reference>
<reference key="3">
    <citation type="journal article" date="2006" name="Gene Expr. Patterns">
        <title>Developmental and cell type-specific regulation of core promoter transcription factors in germ cells of frogs and mice.</title>
        <authorList>
            <person name="Xiao L."/>
            <person name="Kim M."/>
            <person name="DeJong J."/>
        </authorList>
    </citation>
    <scope>TISSUE SPECIFICITY</scope>
</reference>
<reference key="4">
    <citation type="journal article" date="2007" name="EMBO J.">
        <title>TBP paralogs accommodate metazoan- and vertebrate-specific developmental gene regulation.</title>
        <authorList>
            <person name="Jacobi U.G."/>
            <person name="Akkers R.C."/>
            <person name="Pierson E.S."/>
            <person name="Weeks D.L."/>
            <person name="Dagle J.M."/>
            <person name="Veenstra G.J.C."/>
        </authorList>
    </citation>
    <scope>FUNCTION</scope>
</reference>
<evidence type="ECO:0000250" key="1"/>
<evidence type="ECO:0000269" key="2">
    <source>
    </source>
</evidence>
<evidence type="ECO:0000269" key="3">
    <source>
    </source>
</evidence>
<evidence type="ECO:0000305" key="4"/>
<organism>
    <name type="scientific">Xenopus laevis</name>
    <name type="common">African clawed frog</name>
    <dbReference type="NCBI Taxonomy" id="8355"/>
    <lineage>
        <taxon>Eukaryota</taxon>
        <taxon>Metazoa</taxon>
        <taxon>Chordata</taxon>
        <taxon>Craniata</taxon>
        <taxon>Vertebrata</taxon>
        <taxon>Euteleostomi</taxon>
        <taxon>Amphibia</taxon>
        <taxon>Batrachia</taxon>
        <taxon>Anura</taxon>
        <taxon>Pipoidea</taxon>
        <taxon>Pipidae</taxon>
        <taxon>Xenopodinae</taxon>
        <taxon>Xenopus</taxon>
        <taxon>Xenopus</taxon>
    </lineage>
</organism>
<name>TBPL1_XENLA</name>
<sequence>MDADSDVALDILITNVVCVFRTRCHLNLRKIALEGLNVIYKREVSKVLMKLRKPRITATIWSSGKIICTGATSEEEAKVGARRLARSLQKLGFQVKFTEFKVVNVLAVCTMPFEIRLNEFTKQNRPHASYEPELHPAVCYRIKSLRATLQIFSTGSITVTGPDVKSVASAIEQIYPFVFESRKTIL</sequence>
<keyword id="KW-0963">Cytoplasm</keyword>
<keyword id="KW-0217">Developmental protein</keyword>
<keyword id="KW-0238">DNA-binding</keyword>
<keyword id="KW-0539">Nucleus</keyword>
<keyword id="KW-1185">Reference proteome</keyword>
<keyword id="KW-0804">Transcription</keyword>
<keyword id="KW-0805">Transcription regulation</keyword>
<dbReference type="EMBL" id="AJ238441">
    <property type="protein sequence ID" value="CAB41487.1"/>
    <property type="molecule type" value="mRNA"/>
</dbReference>
<dbReference type="EMBL" id="BC090226">
    <property type="protein sequence ID" value="AAH90226.1"/>
    <property type="molecule type" value="mRNA"/>
</dbReference>
<dbReference type="RefSeq" id="NP_001083732.1">
    <property type="nucleotide sequence ID" value="NM_001090263.1"/>
</dbReference>
<dbReference type="SMR" id="Q9W6Z2"/>
<dbReference type="DNASU" id="399086"/>
<dbReference type="GeneID" id="399086"/>
<dbReference type="KEGG" id="xla:399086"/>
<dbReference type="AGR" id="Xenbase:XB-GENE-865785"/>
<dbReference type="CTD" id="399086"/>
<dbReference type="Xenbase" id="XB-GENE-865785">
    <property type="gene designation" value="tbpl1.L"/>
</dbReference>
<dbReference type="OMA" id="NCEYEPE"/>
<dbReference type="OrthoDB" id="2127950at2759"/>
<dbReference type="Proteomes" id="UP000186698">
    <property type="component" value="Chromosome 5L"/>
</dbReference>
<dbReference type="Bgee" id="399086">
    <property type="expression patterns" value="Expressed in egg cell and 19 other cell types or tissues"/>
</dbReference>
<dbReference type="GO" id="GO:0005737">
    <property type="term" value="C:cytoplasm"/>
    <property type="evidence" value="ECO:0000250"/>
    <property type="project" value="UniProtKB"/>
</dbReference>
<dbReference type="GO" id="GO:0005634">
    <property type="term" value="C:nucleus"/>
    <property type="evidence" value="ECO:0000250"/>
    <property type="project" value="UniProtKB"/>
</dbReference>
<dbReference type="GO" id="GO:0003677">
    <property type="term" value="F:DNA binding"/>
    <property type="evidence" value="ECO:0007669"/>
    <property type="project" value="UniProtKB-KW"/>
</dbReference>
<dbReference type="GO" id="GO:0140223">
    <property type="term" value="F:general transcription initiation factor activity"/>
    <property type="evidence" value="ECO:0000318"/>
    <property type="project" value="GO_Central"/>
</dbReference>
<dbReference type="GO" id="GO:0006352">
    <property type="term" value="P:DNA-templated transcription initiation"/>
    <property type="evidence" value="ECO:0000318"/>
    <property type="project" value="GO_Central"/>
</dbReference>
<dbReference type="GO" id="GO:0009792">
    <property type="term" value="P:embryo development ending in birth or egg hatching"/>
    <property type="evidence" value="ECO:0000315"/>
    <property type="project" value="UniProtKB"/>
</dbReference>
<dbReference type="GO" id="GO:0006366">
    <property type="term" value="P:transcription by RNA polymerase II"/>
    <property type="evidence" value="ECO:0000315"/>
    <property type="project" value="UniProtKB"/>
</dbReference>
<dbReference type="CDD" id="cd04517">
    <property type="entry name" value="TLF"/>
    <property type="match status" value="1"/>
</dbReference>
<dbReference type="FunFam" id="3.30.310.10:FF:000005">
    <property type="entry name" value="TATA box-binding protein-like 1"/>
    <property type="match status" value="1"/>
</dbReference>
<dbReference type="FunFam" id="3.30.310.10:FF:000009">
    <property type="entry name" value="TatA box-binding protein-like protein 1"/>
    <property type="match status" value="1"/>
</dbReference>
<dbReference type="Gene3D" id="3.30.310.10">
    <property type="entry name" value="TATA-Binding Protein"/>
    <property type="match status" value="2"/>
</dbReference>
<dbReference type="InterPro" id="IPR000814">
    <property type="entry name" value="TBP"/>
</dbReference>
<dbReference type="InterPro" id="IPR015445">
    <property type="entry name" value="TBP-like"/>
</dbReference>
<dbReference type="InterPro" id="IPR012295">
    <property type="entry name" value="TBP_dom_sf"/>
</dbReference>
<dbReference type="PANTHER" id="PTHR10126">
    <property type="entry name" value="TATA-BOX BINDING PROTEIN"/>
    <property type="match status" value="1"/>
</dbReference>
<dbReference type="Pfam" id="PF00352">
    <property type="entry name" value="TBP"/>
    <property type="match status" value="2"/>
</dbReference>
<dbReference type="PRINTS" id="PR00686">
    <property type="entry name" value="TIFACTORIID"/>
</dbReference>
<dbReference type="SUPFAM" id="SSF55945">
    <property type="entry name" value="TATA-box binding protein-like"/>
    <property type="match status" value="2"/>
</dbReference>
<accession>Q9W6Z2</accession>
<accession>Q5EAV8</accession>
<proteinExistence type="evidence at transcript level"/>
<protein>
    <recommendedName>
        <fullName>TATA box-binding protein-like 1</fullName>
        <shortName>TBP-like 1</shortName>
    </recommendedName>
    <alternativeName>
        <fullName>TATA box-binding protein-related factor 2</fullName>
        <shortName>TBP-related factor 2</shortName>
    </alternativeName>
    <alternativeName>
        <fullName>TBP-like factor</fullName>
        <shortName>xlTLF</shortName>
    </alternativeName>
</protein>
<feature type="chain" id="PRO_0000153995" description="TATA box-binding protein-like 1">
    <location>
        <begin position="1"/>
        <end position="186"/>
    </location>
</feature>